<organism>
    <name type="scientific">Olea europaea</name>
    <name type="common">Common olive</name>
    <dbReference type="NCBI Taxonomy" id="4146"/>
    <lineage>
        <taxon>Eukaryota</taxon>
        <taxon>Viridiplantae</taxon>
        <taxon>Streptophyta</taxon>
        <taxon>Embryophyta</taxon>
        <taxon>Tracheophyta</taxon>
        <taxon>Spermatophyta</taxon>
        <taxon>Magnoliopsida</taxon>
        <taxon>eudicotyledons</taxon>
        <taxon>Gunneridae</taxon>
        <taxon>Pentapetalae</taxon>
        <taxon>asterids</taxon>
        <taxon>lamiids</taxon>
        <taxon>Lamiales</taxon>
        <taxon>Oleaceae</taxon>
        <taxon>Oleeae</taxon>
        <taxon>Olea</taxon>
    </lineage>
</organism>
<protein>
    <recommendedName>
        <fullName>Profilin-3</fullName>
    </recommendedName>
    <alternativeName>
        <fullName>Pollen allergen Ole e 2</fullName>
    </alternativeName>
    <allergenName>Ole e 2</allergenName>
</protein>
<feature type="initiator methionine" description="Removed" evidence="1">
    <location>
        <position position="1"/>
    </location>
</feature>
<feature type="chain" id="PRO_0000425004" description="Profilin-3">
    <location>
        <begin position="2"/>
        <end position="134"/>
    </location>
</feature>
<feature type="short sequence motif" description="Involved in PIP2 interaction">
    <location>
        <begin position="84"/>
        <end position="100"/>
    </location>
</feature>
<feature type="modified residue" description="Phosphothreonine" evidence="1">
    <location>
        <position position="114"/>
    </location>
</feature>
<feature type="disulfide bond" evidence="3">
    <location>
        <begin position="13"/>
        <end position="118"/>
    </location>
</feature>
<proteinExistence type="evidence at protein level"/>
<accession>P0DKF4</accession>
<accession>A4GDQ9</accession>
<sequence length="134" mass="14413">MSWQTYVDDHLMCDIEGHEGHRLTAAAIVGHDGSVWAQSATFPQFKPEEMNGIMTDFNEPGHLAPTGLHLGGTKYMVIQGEAGAVIRGKKGSGGITIKKTGQALVCGIYEEPVTPGQCNMVVERLGDYLLEQGL</sequence>
<comment type="function">
    <text evidence="1">Binds to actin and affects the structure of the cytoskeleton. At high concentrations, profilin prevents the polymerization of actin, whereas it enhances it at low concentrations (By similarity).</text>
</comment>
<comment type="subunit">
    <text evidence="1">Occurs in many kinds of cells as a complex with monomeric actin in a 1:1 ratio.</text>
</comment>
<comment type="subcellular location">
    <subcellularLocation>
        <location evidence="1">Cytoplasm</location>
        <location evidence="1">Cytoskeleton</location>
    </subcellularLocation>
</comment>
<comment type="PTM">
    <text evidence="1">Phosphorylated by MAP kinases.</text>
</comment>
<comment type="polymorphism">
    <text>Several isoforms of the allergen exist due to polymorphism.</text>
</comment>
<comment type="allergen">
    <text>Causes an allergic reaction in human.</text>
</comment>
<comment type="miscellaneous">
    <text evidence="3">The variability of the residues taking part of IgE-binding epitopes might be responsible of the difference in cross-reactivity among olive pollen cultivars, and between distantly related pollen species, leading to a variable range of allergy reactions among atopic patients.</text>
</comment>
<comment type="similarity">
    <text evidence="2">Belongs to the profilin family.</text>
</comment>
<dbReference type="EMBL" id="DQ138327">
    <property type="protein sequence ID" value="AAZ30405.1"/>
    <property type="molecule type" value="mRNA"/>
</dbReference>
<dbReference type="SMR" id="P0DKF4"/>
<dbReference type="GO" id="GO:0005938">
    <property type="term" value="C:cell cortex"/>
    <property type="evidence" value="ECO:0007669"/>
    <property type="project" value="TreeGrafter"/>
</dbReference>
<dbReference type="GO" id="GO:0005856">
    <property type="term" value="C:cytoskeleton"/>
    <property type="evidence" value="ECO:0007669"/>
    <property type="project" value="UniProtKB-SubCell"/>
</dbReference>
<dbReference type="GO" id="GO:0003785">
    <property type="term" value="F:actin monomer binding"/>
    <property type="evidence" value="ECO:0007669"/>
    <property type="project" value="TreeGrafter"/>
</dbReference>
<dbReference type="CDD" id="cd00148">
    <property type="entry name" value="PROF"/>
    <property type="match status" value="1"/>
</dbReference>
<dbReference type="FunFam" id="3.30.450.30:FF:000001">
    <property type="entry name" value="Profilin"/>
    <property type="match status" value="1"/>
</dbReference>
<dbReference type="Gene3D" id="3.30.450.30">
    <property type="entry name" value="Dynein light chain 2a, cytoplasmic"/>
    <property type="match status" value="1"/>
</dbReference>
<dbReference type="InterPro" id="IPR048278">
    <property type="entry name" value="PFN"/>
</dbReference>
<dbReference type="InterPro" id="IPR005455">
    <property type="entry name" value="PFN_euk"/>
</dbReference>
<dbReference type="InterPro" id="IPR036140">
    <property type="entry name" value="PFN_sf"/>
</dbReference>
<dbReference type="InterPro" id="IPR027310">
    <property type="entry name" value="Profilin_CS"/>
</dbReference>
<dbReference type="PANTHER" id="PTHR11604">
    <property type="entry name" value="PROFILIN"/>
    <property type="match status" value="1"/>
</dbReference>
<dbReference type="PANTHER" id="PTHR11604:SF25">
    <property type="entry name" value="PROFILIN-5"/>
    <property type="match status" value="1"/>
</dbReference>
<dbReference type="Pfam" id="PF00235">
    <property type="entry name" value="Profilin"/>
    <property type="match status" value="1"/>
</dbReference>
<dbReference type="PRINTS" id="PR00392">
    <property type="entry name" value="PROFILIN"/>
</dbReference>
<dbReference type="PRINTS" id="PR01640">
    <property type="entry name" value="PROFILINPLNT"/>
</dbReference>
<dbReference type="SMART" id="SM00392">
    <property type="entry name" value="PROF"/>
    <property type="match status" value="1"/>
</dbReference>
<dbReference type="SUPFAM" id="SSF55770">
    <property type="entry name" value="Profilin (actin-binding protein)"/>
    <property type="match status" value="1"/>
</dbReference>
<dbReference type="PROSITE" id="PS00414">
    <property type="entry name" value="PROFILIN"/>
    <property type="match status" value="1"/>
</dbReference>
<keyword id="KW-0009">Actin-binding</keyword>
<keyword id="KW-0020">Allergen</keyword>
<keyword id="KW-0963">Cytoplasm</keyword>
<keyword id="KW-0206">Cytoskeleton</keyword>
<keyword id="KW-1015">Disulfide bond</keyword>
<keyword id="KW-0597">Phosphoprotein</keyword>
<reference key="1">
    <citation type="journal article" date="2012" name="PLoS ONE">
        <title>Characterization of profilin polymorphism in pollen with a focus on multifunctionality.</title>
        <authorList>
            <person name="Jimenez-Lopez J.C."/>
            <person name="Morales S."/>
            <person name="Castro A.J."/>
            <person name="Volkmann D."/>
            <person name="Rodriguez-Garcia M.I."/>
            <person name="Alche Jde D."/>
        </authorList>
    </citation>
    <scope>NUCLEOTIDE SEQUENCE [MRNA]</scope>
    <scope>POLYMORPHISM</scope>
    <source>
        <strain>cv. Arbequina</strain>
        <tissue>Pollen</tissue>
    </source>
</reference>
<reference key="2">
    <citation type="journal article" date="2013" name="PLoS ONE">
        <title>Analysis of the effects of polymorphism on pollen profilin structural functionality and the generation of conformational, T- and B-cell epitopes.</title>
        <authorList>
            <person name="Jimenez-Lopez J.C."/>
            <person name="Rodriguez-Garcia M.I."/>
            <person name="Alche J.D."/>
        </authorList>
    </citation>
    <scope>3D-STRUCTURE MODELING</scope>
    <scope>DISULFIDE BOND</scope>
</reference>
<evidence type="ECO:0000250" key="1"/>
<evidence type="ECO:0000305" key="2"/>
<evidence type="ECO:0000305" key="3">
    <source>
    </source>
</evidence>
<name>PROAM_OLEEU</name>